<organism>
    <name type="scientific">Shigella boydii serotype 18 (strain CDC 3083-94 / BS512)</name>
    <dbReference type="NCBI Taxonomy" id="344609"/>
    <lineage>
        <taxon>Bacteria</taxon>
        <taxon>Pseudomonadati</taxon>
        <taxon>Pseudomonadota</taxon>
        <taxon>Gammaproteobacteria</taxon>
        <taxon>Enterobacterales</taxon>
        <taxon>Enterobacteriaceae</taxon>
        <taxon>Shigella</taxon>
    </lineage>
</organism>
<evidence type="ECO:0000255" key="1">
    <source>
        <dbReference type="HAMAP-Rule" id="MF_01818"/>
    </source>
</evidence>
<protein>
    <recommendedName>
        <fullName evidence="1">Ribonuclease BN</fullName>
        <shortName evidence="1">RNase BN</shortName>
        <ecNumber evidence="1">3.1.-.-</ecNumber>
    </recommendedName>
    <alternativeName>
        <fullName evidence="1">Ribonuclease Z homolog</fullName>
        <shortName evidence="1">RNase Z homolog</shortName>
    </alternativeName>
</protein>
<feature type="chain" id="PRO_1000187987" description="Ribonuclease BN">
    <location>
        <begin position="1"/>
        <end position="305"/>
    </location>
</feature>
<feature type="active site" description="Proton acceptor" evidence="1">
    <location>
        <position position="68"/>
    </location>
</feature>
<feature type="binding site" evidence="1">
    <location>
        <position position="64"/>
    </location>
    <ligand>
        <name>Zn(2+)</name>
        <dbReference type="ChEBI" id="CHEBI:29105"/>
        <label>1</label>
        <note>catalytic</note>
    </ligand>
</feature>
<feature type="binding site" evidence="1">
    <location>
        <position position="66"/>
    </location>
    <ligand>
        <name>Zn(2+)</name>
        <dbReference type="ChEBI" id="CHEBI:29105"/>
        <label>1</label>
        <note>catalytic</note>
    </ligand>
</feature>
<feature type="binding site" evidence="1">
    <location>
        <position position="68"/>
    </location>
    <ligand>
        <name>Zn(2+)</name>
        <dbReference type="ChEBI" id="CHEBI:29105"/>
        <label>2</label>
        <note>catalytic</note>
    </ligand>
</feature>
<feature type="binding site" evidence="1">
    <location>
        <position position="69"/>
    </location>
    <ligand>
        <name>Zn(2+)</name>
        <dbReference type="ChEBI" id="CHEBI:29105"/>
        <label>2</label>
        <note>catalytic</note>
    </ligand>
</feature>
<feature type="binding site" evidence="1">
    <location>
        <position position="141"/>
    </location>
    <ligand>
        <name>Zn(2+)</name>
        <dbReference type="ChEBI" id="CHEBI:29105"/>
        <label>1</label>
        <note>catalytic</note>
    </ligand>
</feature>
<feature type="binding site" evidence="1">
    <location>
        <position position="212"/>
    </location>
    <ligand>
        <name>Zn(2+)</name>
        <dbReference type="ChEBI" id="CHEBI:29105"/>
        <label>1</label>
        <note>catalytic</note>
    </ligand>
</feature>
<feature type="binding site" evidence="1">
    <location>
        <position position="212"/>
    </location>
    <ligand>
        <name>Zn(2+)</name>
        <dbReference type="ChEBI" id="CHEBI:29105"/>
        <label>2</label>
        <note>catalytic</note>
    </ligand>
</feature>
<feature type="binding site" evidence="1">
    <location>
        <position position="270"/>
    </location>
    <ligand>
        <name>Zn(2+)</name>
        <dbReference type="ChEBI" id="CHEBI:29105"/>
        <label>2</label>
        <note>catalytic</note>
    </ligand>
</feature>
<sequence>MELIFLGTSAGVPTRTRNVTAILLNLQHPTQSGLWLFDCGEGTQHQLLHTAFNPGKLDKIFISHLHGDHLFGLPGLLCSRSMSGIIQPLTIYGPQGIREFVETALRISGSWTDYPLEIVEIGAGEILDDGLRKVTAYPLEHPLECYGYRIEEHDKPGALNAQALKAAGVPPGPLFQELKAGKTIMLEDGRQINGADYLAAPVPGKALAIFGDTGPCDAALDLAKGVDVMVHEATLDITMEAKANSRGHSSTRQAATLAREAGVGKLIITHVSSRYDDKGCQHLLRECRSIFPATELANDFTVFNV</sequence>
<gene>
    <name evidence="1" type="primary">rbn</name>
    <name type="synonym">rnz</name>
    <name type="ordered locus">SbBS512_E2647</name>
</gene>
<keyword id="KW-0255">Endonuclease</keyword>
<keyword id="KW-0269">Exonuclease</keyword>
<keyword id="KW-0378">Hydrolase</keyword>
<keyword id="KW-0479">Metal-binding</keyword>
<keyword id="KW-0540">Nuclease</keyword>
<keyword id="KW-1185">Reference proteome</keyword>
<keyword id="KW-0819">tRNA processing</keyword>
<keyword id="KW-0862">Zinc</keyword>
<dbReference type="EC" id="3.1.-.-" evidence="1"/>
<dbReference type="EMBL" id="CP001063">
    <property type="protein sequence ID" value="ACD09128.1"/>
    <property type="molecule type" value="Genomic_DNA"/>
</dbReference>
<dbReference type="RefSeq" id="WP_001424321.1">
    <property type="nucleotide sequence ID" value="NC_010658.1"/>
</dbReference>
<dbReference type="SMR" id="B2TW54"/>
<dbReference type="STRING" id="344609.SbBS512_E2647"/>
<dbReference type="KEGG" id="sbc:SbBS512_E2647"/>
<dbReference type="HOGENOM" id="CLU_031317_2_0_6"/>
<dbReference type="Proteomes" id="UP000001030">
    <property type="component" value="Chromosome"/>
</dbReference>
<dbReference type="GO" id="GO:0042781">
    <property type="term" value="F:3'-tRNA processing endoribonuclease activity"/>
    <property type="evidence" value="ECO:0007669"/>
    <property type="project" value="TreeGrafter"/>
</dbReference>
<dbReference type="GO" id="GO:0004527">
    <property type="term" value="F:exonuclease activity"/>
    <property type="evidence" value="ECO:0007669"/>
    <property type="project" value="UniProtKB-UniRule"/>
</dbReference>
<dbReference type="GO" id="GO:0008270">
    <property type="term" value="F:zinc ion binding"/>
    <property type="evidence" value="ECO:0007669"/>
    <property type="project" value="UniProtKB-UniRule"/>
</dbReference>
<dbReference type="CDD" id="cd07717">
    <property type="entry name" value="RNaseZ_ZiPD-like_MBL-fold"/>
    <property type="match status" value="1"/>
</dbReference>
<dbReference type="FunFam" id="3.60.15.10:FF:000002">
    <property type="entry name" value="Ribonuclease Z"/>
    <property type="match status" value="1"/>
</dbReference>
<dbReference type="Gene3D" id="3.60.15.10">
    <property type="entry name" value="Ribonuclease Z/Hydroxyacylglutathione hydrolase-like"/>
    <property type="match status" value="1"/>
</dbReference>
<dbReference type="HAMAP" id="MF_01818">
    <property type="entry name" value="RNase_Z_BN"/>
    <property type="match status" value="1"/>
</dbReference>
<dbReference type="InterPro" id="IPR001279">
    <property type="entry name" value="Metallo-B-lactamas"/>
</dbReference>
<dbReference type="InterPro" id="IPR036866">
    <property type="entry name" value="RibonucZ/Hydroxyglut_hydro"/>
</dbReference>
<dbReference type="InterPro" id="IPR013469">
    <property type="entry name" value="Rnase_BN"/>
</dbReference>
<dbReference type="InterPro" id="IPR013471">
    <property type="entry name" value="RNase_Z/BN"/>
</dbReference>
<dbReference type="NCBIfam" id="NF000800">
    <property type="entry name" value="PRK00055.1-1"/>
    <property type="match status" value="1"/>
</dbReference>
<dbReference type="NCBIfam" id="NF000801">
    <property type="entry name" value="PRK00055.1-3"/>
    <property type="match status" value="1"/>
</dbReference>
<dbReference type="NCBIfam" id="TIGR02651">
    <property type="entry name" value="RNase_Z"/>
    <property type="match status" value="1"/>
</dbReference>
<dbReference type="NCBIfam" id="TIGR02649">
    <property type="entry name" value="true_RNase_BN"/>
    <property type="match status" value="1"/>
</dbReference>
<dbReference type="PANTHER" id="PTHR46018">
    <property type="entry name" value="ZINC PHOSPHODIESTERASE ELAC PROTEIN 1"/>
    <property type="match status" value="1"/>
</dbReference>
<dbReference type="PANTHER" id="PTHR46018:SF2">
    <property type="entry name" value="ZINC PHOSPHODIESTERASE ELAC PROTEIN 1"/>
    <property type="match status" value="1"/>
</dbReference>
<dbReference type="Pfam" id="PF12706">
    <property type="entry name" value="Lactamase_B_2"/>
    <property type="match status" value="1"/>
</dbReference>
<dbReference type="SUPFAM" id="SSF56281">
    <property type="entry name" value="Metallo-hydrolase/oxidoreductase"/>
    <property type="match status" value="1"/>
</dbReference>
<comment type="function">
    <text evidence="1">Zinc phosphodiesterase, which has both exoribonuclease and endoribonuclease activities.</text>
</comment>
<comment type="cofactor">
    <cofactor evidence="1">
        <name>Zn(2+)</name>
        <dbReference type="ChEBI" id="CHEBI:29105"/>
    </cofactor>
    <text evidence="1">Binds 2 Zn(2+) ions.</text>
</comment>
<comment type="subunit">
    <text evidence="1">Homodimer.</text>
</comment>
<comment type="similarity">
    <text evidence="1">Belongs to the RNase Z family. RNase BN subfamily.</text>
</comment>
<name>RBN_SHIB3</name>
<accession>B2TW54</accession>
<reference key="1">
    <citation type="submission" date="2008-05" db="EMBL/GenBank/DDBJ databases">
        <title>Complete sequence of Shigella boydii serotype 18 strain BS512.</title>
        <authorList>
            <person name="Rasko D.A."/>
            <person name="Rosovitz M."/>
            <person name="Maurelli A.T."/>
            <person name="Myers G."/>
            <person name="Seshadri R."/>
            <person name="Cer R."/>
            <person name="Jiang L."/>
            <person name="Ravel J."/>
            <person name="Sebastian Y."/>
        </authorList>
    </citation>
    <scope>NUCLEOTIDE SEQUENCE [LARGE SCALE GENOMIC DNA]</scope>
    <source>
        <strain>CDC 3083-94 / BS512</strain>
    </source>
</reference>
<proteinExistence type="inferred from homology"/>